<proteinExistence type="inferred from homology"/>
<evidence type="ECO:0000250" key="1"/>
<evidence type="ECO:0000255" key="2">
    <source>
        <dbReference type="HAMAP-Rule" id="MF_01303"/>
    </source>
</evidence>
<gene>
    <name evidence="2" type="primary">psaC</name>
</gene>
<organism>
    <name type="scientific">Nicotiana tomentosiformis</name>
    <name type="common">Tobacco</name>
    <dbReference type="NCBI Taxonomy" id="4098"/>
    <lineage>
        <taxon>Eukaryota</taxon>
        <taxon>Viridiplantae</taxon>
        <taxon>Streptophyta</taxon>
        <taxon>Embryophyta</taxon>
        <taxon>Tracheophyta</taxon>
        <taxon>Spermatophyta</taxon>
        <taxon>Magnoliopsida</taxon>
        <taxon>eudicotyledons</taxon>
        <taxon>Gunneridae</taxon>
        <taxon>Pentapetalae</taxon>
        <taxon>asterids</taxon>
        <taxon>lamiids</taxon>
        <taxon>Solanales</taxon>
        <taxon>Solanaceae</taxon>
        <taxon>Nicotianoideae</taxon>
        <taxon>Nicotianeae</taxon>
        <taxon>Nicotiana</taxon>
    </lineage>
</organism>
<accession>Q33BX1</accession>
<keyword id="KW-0004">4Fe-4S</keyword>
<keyword id="KW-0150">Chloroplast</keyword>
<keyword id="KW-0249">Electron transport</keyword>
<keyword id="KW-0408">Iron</keyword>
<keyword id="KW-0411">Iron-sulfur</keyword>
<keyword id="KW-0472">Membrane</keyword>
<keyword id="KW-0479">Metal-binding</keyword>
<keyword id="KW-0560">Oxidoreductase</keyword>
<keyword id="KW-0602">Photosynthesis</keyword>
<keyword id="KW-0603">Photosystem I</keyword>
<keyword id="KW-0934">Plastid</keyword>
<keyword id="KW-0677">Repeat</keyword>
<keyword id="KW-0793">Thylakoid</keyword>
<keyword id="KW-0813">Transport</keyword>
<geneLocation type="chloroplast"/>
<protein>
    <recommendedName>
        <fullName evidence="2">Photosystem I iron-sulfur center</fullName>
        <ecNumber evidence="2">1.97.1.12</ecNumber>
    </recommendedName>
    <alternativeName>
        <fullName evidence="2">9 kDa polypeptide</fullName>
    </alternativeName>
    <alternativeName>
        <fullName evidence="2">PSI-C</fullName>
    </alternativeName>
    <alternativeName>
        <fullName evidence="2">Photosystem I subunit VII</fullName>
    </alternativeName>
    <alternativeName>
        <fullName evidence="2">PsaC</fullName>
    </alternativeName>
</protein>
<sequence length="81" mass="9038">MSHSVKIYDTCIGCTQCVRACPTDVLEMIPWDGCKAKQIASAPRTEDCVGCKRCESACPTDFLSVRVYLWHETTRSMGLAY</sequence>
<dbReference type="EC" id="1.97.1.12" evidence="2"/>
<dbReference type="EMBL" id="AB240139">
    <property type="protein sequence ID" value="BAE48064.1"/>
    <property type="molecule type" value="Genomic_DNA"/>
</dbReference>
<dbReference type="RefSeq" id="YP_398924.1">
    <property type="nucleotide sequence ID" value="NC_007602.1"/>
</dbReference>
<dbReference type="SMR" id="Q33BX1"/>
<dbReference type="GeneID" id="3776364"/>
<dbReference type="KEGG" id="nto:3776364"/>
<dbReference type="OrthoDB" id="9at2759"/>
<dbReference type="GO" id="GO:0009535">
    <property type="term" value="C:chloroplast thylakoid membrane"/>
    <property type="evidence" value="ECO:0007669"/>
    <property type="project" value="UniProtKB-SubCell"/>
</dbReference>
<dbReference type="GO" id="GO:0009522">
    <property type="term" value="C:photosystem I"/>
    <property type="evidence" value="ECO:0007669"/>
    <property type="project" value="UniProtKB-KW"/>
</dbReference>
<dbReference type="GO" id="GO:0051539">
    <property type="term" value="F:4 iron, 4 sulfur cluster binding"/>
    <property type="evidence" value="ECO:0007669"/>
    <property type="project" value="UniProtKB-KW"/>
</dbReference>
<dbReference type="GO" id="GO:0009055">
    <property type="term" value="F:electron transfer activity"/>
    <property type="evidence" value="ECO:0007669"/>
    <property type="project" value="UniProtKB-UniRule"/>
</dbReference>
<dbReference type="GO" id="GO:0046872">
    <property type="term" value="F:metal ion binding"/>
    <property type="evidence" value="ECO:0007669"/>
    <property type="project" value="UniProtKB-KW"/>
</dbReference>
<dbReference type="GO" id="GO:0016491">
    <property type="term" value="F:oxidoreductase activity"/>
    <property type="evidence" value="ECO:0007669"/>
    <property type="project" value="UniProtKB-KW"/>
</dbReference>
<dbReference type="GO" id="GO:0009773">
    <property type="term" value="P:photosynthetic electron transport in photosystem I"/>
    <property type="evidence" value="ECO:0007669"/>
    <property type="project" value="InterPro"/>
</dbReference>
<dbReference type="FunFam" id="3.30.70.20:FF:000001">
    <property type="entry name" value="Photosystem I iron-sulfur center"/>
    <property type="match status" value="1"/>
</dbReference>
<dbReference type="Gene3D" id="3.30.70.20">
    <property type="match status" value="1"/>
</dbReference>
<dbReference type="HAMAP" id="MF_01303">
    <property type="entry name" value="PSI_PsaC"/>
    <property type="match status" value="1"/>
</dbReference>
<dbReference type="InterPro" id="IPR017896">
    <property type="entry name" value="4Fe4S_Fe-S-bd"/>
</dbReference>
<dbReference type="InterPro" id="IPR017900">
    <property type="entry name" value="4Fe4S_Fe_S_CS"/>
</dbReference>
<dbReference type="InterPro" id="IPR050157">
    <property type="entry name" value="PSI_iron-sulfur_center"/>
</dbReference>
<dbReference type="InterPro" id="IPR017491">
    <property type="entry name" value="PSI_PsaC"/>
</dbReference>
<dbReference type="NCBIfam" id="TIGR03048">
    <property type="entry name" value="PS_I_psaC"/>
    <property type="match status" value="1"/>
</dbReference>
<dbReference type="PANTHER" id="PTHR24960:SF79">
    <property type="entry name" value="PHOTOSYSTEM I IRON-SULFUR CENTER"/>
    <property type="match status" value="1"/>
</dbReference>
<dbReference type="PANTHER" id="PTHR24960">
    <property type="entry name" value="PHOTOSYSTEM I IRON-SULFUR CENTER-RELATED"/>
    <property type="match status" value="1"/>
</dbReference>
<dbReference type="Pfam" id="PF14697">
    <property type="entry name" value="Fer4_21"/>
    <property type="match status" value="1"/>
</dbReference>
<dbReference type="SUPFAM" id="SSF54862">
    <property type="entry name" value="4Fe-4S ferredoxins"/>
    <property type="match status" value="1"/>
</dbReference>
<dbReference type="PROSITE" id="PS00198">
    <property type="entry name" value="4FE4S_FER_1"/>
    <property type="match status" value="2"/>
</dbReference>
<dbReference type="PROSITE" id="PS51379">
    <property type="entry name" value="4FE4S_FER_2"/>
    <property type="match status" value="2"/>
</dbReference>
<feature type="initiator methionine" description="Removed" evidence="1">
    <location>
        <position position="1"/>
    </location>
</feature>
<feature type="chain" id="PRO_0000275990" description="Photosystem I iron-sulfur center">
    <location>
        <begin position="2"/>
        <end position="81"/>
    </location>
</feature>
<feature type="domain" description="4Fe-4S ferredoxin-type 1" evidence="2">
    <location>
        <begin position="2"/>
        <end position="31"/>
    </location>
</feature>
<feature type="domain" description="4Fe-4S ferredoxin-type 2" evidence="2">
    <location>
        <begin position="39"/>
        <end position="68"/>
    </location>
</feature>
<feature type="binding site" evidence="2">
    <location>
        <position position="11"/>
    </location>
    <ligand>
        <name>[4Fe-4S] cluster</name>
        <dbReference type="ChEBI" id="CHEBI:49883"/>
        <label>1</label>
    </ligand>
</feature>
<feature type="binding site" evidence="2">
    <location>
        <position position="14"/>
    </location>
    <ligand>
        <name>[4Fe-4S] cluster</name>
        <dbReference type="ChEBI" id="CHEBI:49883"/>
        <label>1</label>
    </ligand>
</feature>
<feature type="binding site" evidence="2">
    <location>
        <position position="17"/>
    </location>
    <ligand>
        <name>[4Fe-4S] cluster</name>
        <dbReference type="ChEBI" id="CHEBI:49883"/>
        <label>1</label>
    </ligand>
</feature>
<feature type="binding site" evidence="2">
    <location>
        <position position="21"/>
    </location>
    <ligand>
        <name>[4Fe-4S] cluster</name>
        <dbReference type="ChEBI" id="CHEBI:49883"/>
        <label>2</label>
    </ligand>
</feature>
<feature type="binding site" evidence="2">
    <location>
        <position position="48"/>
    </location>
    <ligand>
        <name>[4Fe-4S] cluster</name>
        <dbReference type="ChEBI" id="CHEBI:49883"/>
        <label>2</label>
    </ligand>
</feature>
<feature type="binding site" evidence="2">
    <location>
        <position position="51"/>
    </location>
    <ligand>
        <name>[4Fe-4S] cluster</name>
        <dbReference type="ChEBI" id="CHEBI:49883"/>
        <label>2</label>
    </ligand>
</feature>
<feature type="binding site" evidence="2">
    <location>
        <position position="54"/>
    </location>
    <ligand>
        <name>[4Fe-4S] cluster</name>
        <dbReference type="ChEBI" id="CHEBI:49883"/>
        <label>2</label>
    </ligand>
</feature>
<feature type="binding site" evidence="2">
    <location>
        <position position="58"/>
    </location>
    <ligand>
        <name>[4Fe-4S] cluster</name>
        <dbReference type="ChEBI" id="CHEBI:49883"/>
        <label>1</label>
    </ligand>
</feature>
<reference key="1">
    <citation type="journal article" date="2006" name="Mol. Genet. Genomics">
        <title>The chloroplast genome of Nicotiana sylvestris and Nicotiana tomentosiformis: complete sequencing confirms that the Nicotiana sylvestris progenitor is the maternal genome donor of Nicotiana tabacum.</title>
        <authorList>
            <person name="Yukawa M."/>
            <person name="Tsudzuki T."/>
            <person name="Sugiura M."/>
        </authorList>
    </citation>
    <scope>NUCLEOTIDE SEQUENCE [LARGE SCALE GENOMIC DNA]</scope>
</reference>
<name>PSAC_NICTO</name>
<comment type="function">
    <text evidence="2">Apoprotein for the two 4Fe-4S centers FA and FB of photosystem I (PSI); essential for photochemical activity. FB is the terminal electron acceptor of PSI, donating electrons to ferredoxin. The C-terminus interacts with PsaA/B/D and helps assemble the protein into the PSI complex. Required for binding of PsaD and PsaE to PSI. PSI is a plastocyanin-ferredoxin oxidoreductase, converting photonic excitation into a charge separation, which transfers an electron from the donor P700 chlorophyll pair to the spectroscopically characterized acceptors A0, A1, FX, FA and FB in turn.</text>
</comment>
<comment type="catalytic activity">
    <reaction evidence="2">
        <text>reduced [plastocyanin] + hnu + oxidized [2Fe-2S]-[ferredoxin] = oxidized [plastocyanin] + reduced [2Fe-2S]-[ferredoxin]</text>
        <dbReference type="Rhea" id="RHEA:30407"/>
        <dbReference type="Rhea" id="RHEA-COMP:10000"/>
        <dbReference type="Rhea" id="RHEA-COMP:10001"/>
        <dbReference type="Rhea" id="RHEA-COMP:10039"/>
        <dbReference type="Rhea" id="RHEA-COMP:10040"/>
        <dbReference type="ChEBI" id="CHEBI:29036"/>
        <dbReference type="ChEBI" id="CHEBI:30212"/>
        <dbReference type="ChEBI" id="CHEBI:33737"/>
        <dbReference type="ChEBI" id="CHEBI:33738"/>
        <dbReference type="ChEBI" id="CHEBI:49552"/>
        <dbReference type="EC" id="1.97.1.12"/>
    </reaction>
</comment>
<comment type="cofactor">
    <cofactor evidence="2">
        <name>[4Fe-4S] cluster</name>
        <dbReference type="ChEBI" id="CHEBI:49883"/>
    </cofactor>
    <text evidence="2">Binds 2 [4Fe-4S] clusters. Cluster 2 is most probably the spectroscopically characterized electron acceptor FA and cluster 1 is most probably FB.</text>
</comment>
<comment type="subunit">
    <text evidence="2">The eukaryotic PSI reaction center is composed of at least 11 subunits.</text>
</comment>
<comment type="subcellular location">
    <subcellularLocation>
        <location evidence="2">Plastid</location>
        <location evidence="2">Chloroplast thylakoid membrane</location>
        <topology evidence="2">Peripheral membrane protein</topology>
        <orientation evidence="2">Stromal side</orientation>
    </subcellularLocation>
</comment>